<dbReference type="EMBL" id="CP000099">
    <property type="protein sequence ID" value="AAZ69947.1"/>
    <property type="molecule type" value="Genomic_DNA"/>
</dbReference>
<dbReference type="SMR" id="Q46DU5"/>
<dbReference type="STRING" id="269797.Mbar_A0975"/>
<dbReference type="PaxDb" id="269797-Mbar_A0975"/>
<dbReference type="KEGG" id="mba:Mbar_A0975"/>
<dbReference type="eggNOG" id="arCOG01045">
    <property type="taxonomic scope" value="Archaea"/>
</dbReference>
<dbReference type="HOGENOM" id="CLU_096329_0_0_2"/>
<dbReference type="OrthoDB" id="85381at2157"/>
<dbReference type="GO" id="GO:0005524">
    <property type="term" value="F:ATP binding"/>
    <property type="evidence" value="ECO:0007669"/>
    <property type="project" value="UniProtKB-UniRule"/>
</dbReference>
<dbReference type="Gene3D" id="3.40.50.300">
    <property type="entry name" value="P-loop containing nucleotide triphosphate hydrolases"/>
    <property type="match status" value="1"/>
</dbReference>
<dbReference type="HAMAP" id="MF_01111">
    <property type="entry name" value="UPF0200"/>
    <property type="match status" value="1"/>
</dbReference>
<dbReference type="InterPro" id="IPR022970">
    <property type="entry name" value="NTP_hydrolase-rel"/>
</dbReference>
<dbReference type="InterPro" id="IPR027417">
    <property type="entry name" value="P-loop_NTPase"/>
</dbReference>
<dbReference type="PANTHER" id="PTHR41930:SF1">
    <property type="entry name" value="DEPHOSPHO-COA KINASE"/>
    <property type="match status" value="1"/>
</dbReference>
<dbReference type="PANTHER" id="PTHR41930">
    <property type="entry name" value="UPF0200 PROTEIN MJ1399"/>
    <property type="match status" value="1"/>
</dbReference>
<dbReference type="Pfam" id="PF13207">
    <property type="entry name" value="AAA_17"/>
    <property type="match status" value="1"/>
</dbReference>
<dbReference type="SUPFAM" id="SSF52540">
    <property type="entry name" value="P-loop containing nucleoside triphosphate hydrolases"/>
    <property type="match status" value="1"/>
</dbReference>
<accession>Q46DU5</accession>
<protein>
    <recommendedName>
        <fullName evidence="1">UPF0200 protein Mbar_A0975</fullName>
    </recommendedName>
</protein>
<keyword id="KW-0067">ATP-binding</keyword>
<keyword id="KW-0547">Nucleotide-binding</keyword>
<comment type="similarity">
    <text evidence="1">Belongs to the UPF0200 family.</text>
</comment>
<gene>
    <name type="ordered locus">Mbar_A0975</name>
</gene>
<evidence type="ECO:0000255" key="1">
    <source>
        <dbReference type="HAMAP-Rule" id="MF_01111"/>
    </source>
</evidence>
<reference key="1">
    <citation type="journal article" date="2006" name="J. Bacteriol.">
        <title>The Methanosarcina barkeri genome: comparative analysis with Methanosarcina acetivorans and Methanosarcina mazei reveals extensive rearrangement within methanosarcinal genomes.</title>
        <authorList>
            <person name="Maeder D.L."/>
            <person name="Anderson I."/>
            <person name="Brettin T.S."/>
            <person name="Bruce D.C."/>
            <person name="Gilna P."/>
            <person name="Han C.S."/>
            <person name="Lapidus A."/>
            <person name="Metcalf W.W."/>
            <person name="Saunders E."/>
            <person name="Tapia R."/>
            <person name="Sowers K.R."/>
        </authorList>
    </citation>
    <scope>NUCLEOTIDE SEQUENCE [LARGE SCALE GENOMIC DNA]</scope>
    <source>
        <strain>Fusaro / DSM 804</strain>
    </source>
</reference>
<feature type="chain" id="PRO_1000084871" description="UPF0200 protein Mbar_A0975">
    <location>
        <begin position="1"/>
        <end position="186"/>
    </location>
</feature>
<feature type="binding site" evidence="1">
    <location>
        <begin position="8"/>
        <end position="15"/>
    </location>
    <ligand>
        <name>ATP</name>
        <dbReference type="ChEBI" id="CHEBI:30616"/>
    </ligand>
</feature>
<name>Y975_METBF</name>
<organism>
    <name type="scientific">Methanosarcina barkeri (strain Fusaro / DSM 804)</name>
    <dbReference type="NCBI Taxonomy" id="269797"/>
    <lineage>
        <taxon>Archaea</taxon>
        <taxon>Methanobacteriati</taxon>
        <taxon>Methanobacteriota</taxon>
        <taxon>Stenosarchaea group</taxon>
        <taxon>Methanomicrobia</taxon>
        <taxon>Methanosarcinales</taxon>
        <taxon>Methanosarcinaceae</taxon>
        <taxon>Methanosarcina</taxon>
    </lineage>
</organism>
<proteinExistence type="inferred from homology"/>
<sequence length="186" mass="20579">MKIIAFVGMPASGKSEAARIAAEMGIPVINMGDVIRKEVSRRGLEPNDSNTGMVATQLRKCEGMDAVAVRCISQIRDAGSDLIVVDGVRGVAEVECFRRELGEGFILISIYAPIEIRFSRVQKRGRSDDMNSIEGLRNRDERELSWGMGEAIEASNIEIENNSTLEIFKKDVVEVLSNYLRQTPSE</sequence>